<protein>
    <recommendedName>
        <fullName evidence="1">Ribosomal RNA small subunit methyltransferase C</fullName>
        <ecNumber evidence="1">2.1.1.172</ecNumber>
    </recommendedName>
    <alternativeName>
        <fullName evidence="1">16S rRNA m2G1207 methyltransferase</fullName>
    </alternativeName>
    <alternativeName>
        <fullName evidence="1">rRNA (guanine-N(2)-)-methyltransferase RsmC</fullName>
    </alternativeName>
</protein>
<accession>Q1C153</accession>
<comment type="function">
    <text evidence="1">Specifically methylates the guanine in position 1207 of 16S rRNA in the 30S particle.</text>
</comment>
<comment type="catalytic activity">
    <reaction evidence="1">
        <text>guanosine(1207) in 16S rRNA + S-adenosyl-L-methionine = N(2)-methylguanosine(1207) in 16S rRNA + S-adenosyl-L-homocysteine + H(+)</text>
        <dbReference type="Rhea" id="RHEA:42736"/>
        <dbReference type="Rhea" id="RHEA-COMP:10213"/>
        <dbReference type="Rhea" id="RHEA-COMP:10214"/>
        <dbReference type="ChEBI" id="CHEBI:15378"/>
        <dbReference type="ChEBI" id="CHEBI:57856"/>
        <dbReference type="ChEBI" id="CHEBI:59789"/>
        <dbReference type="ChEBI" id="CHEBI:74269"/>
        <dbReference type="ChEBI" id="CHEBI:74481"/>
        <dbReference type="EC" id="2.1.1.172"/>
    </reaction>
</comment>
<comment type="subunit">
    <text evidence="1">Monomer.</text>
</comment>
<comment type="subcellular location">
    <subcellularLocation>
        <location evidence="1">Cytoplasm</location>
    </subcellularLocation>
</comment>
<comment type="similarity">
    <text evidence="1">Belongs to the methyltransferase superfamily. RsmC family.</text>
</comment>
<gene>
    <name evidence="1" type="primary">rsmC</name>
    <name type="ordered locus">YPA_3857</name>
</gene>
<feature type="chain" id="PRO_0000369803" description="Ribosomal RNA small subunit methyltransferase C">
    <location>
        <begin position="1"/>
        <end position="347"/>
    </location>
</feature>
<evidence type="ECO:0000255" key="1">
    <source>
        <dbReference type="HAMAP-Rule" id="MF_01862"/>
    </source>
</evidence>
<organism>
    <name type="scientific">Yersinia pestis bv. Antiqua (strain Antiqua)</name>
    <dbReference type="NCBI Taxonomy" id="360102"/>
    <lineage>
        <taxon>Bacteria</taxon>
        <taxon>Pseudomonadati</taxon>
        <taxon>Pseudomonadota</taxon>
        <taxon>Gammaproteobacteria</taxon>
        <taxon>Enterobacterales</taxon>
        <taxon>Yersiniaceae</taxon>
        <taxon>Yersinia</taxon>
    </lineage>
</organism>
<keyword id="KW-0963">Cytoplasm</keyword>
<keyword id="KW-0489">Methyltransferase</keyword>
<keyword id="KW-0698">rRNA processing</keyword>
<keyword id="KW-0949">S-adenosyl-L-methionine</keyword>
<keyword id="KW-0808">Transferase</keyword>
<dbReference type="EC" id="2.1.1.172" evidence="1"/>
<dbReference type="EMBL" id="CP000308">
    <property type="protein sequence ID" value="ABG15819.1"/>
    <property type="molecule type" value="Genomic_DNA"/>
</dbReference>
<dbReference type="RefSeq" id="WP_002209206.1">
    <property type="nucleotide sequence ID" value="NZ_CP009906.1"/>
</dbReference>
<dbReference type="SMR" id="Q1C153"/>
<dbReference type="GeneID" id="57974183"/>
<dbReference type="KEGG" id="ypa:YPA_3857"/>
<dbReference type="Proteomes" id="UP000001971">
    <property type="component" value="Chromosome"/>
</dbReference>
<dbReference type="GO" id="GO:0005737">
    <property type="term" value="C:cytoplasm"/>
    <property type="evidence" value="ECO:0007669"/>
    <property type="project" value="UniProtKB-SubCell"/>
</dbReference>
<dbReference type="GO" id="GO:0052914">
    <property type="term" value="F:16S rRNA (guanine(1207)-N(2))-methyltransferase activity"/>
    <property type="evidence" value="ECO:0007669"/>
    <property type="project" value="UniProtKB-EC"/>
</dbReference>
<dbReference type="GO" id="GO:0003676">
    <property type="term" value="F:nucleic acid binding"/>
    <property type="evidence" value="ECO:0007669"/>
    <property type="project" value="InterPro"/>
</dbReference>
<dbReference type="CDD" id="cd02440">
    <property type="entry name" value="AdoMet_MTases"/>
    <property type="match status" value="1"/>
</dbReference>
<dbReference type="Gene3D" id="3.40.50.150">
    <property type="entry name" value="Vaccinia Virus protein VP39"/>
    <property type="match status" value="2"/>
</dbReference>
<dbReference type="HAMAP" id="MF_01862">
    <property type="entry name" value="16SrRNA_methyltr_C"/>
    <property type="match status" value="1"/>
</dbReference>
<dbReference type="InterPro" id="IPR002052">
    <property type="entry name" value="DNA_methylase_N6_adenine_CS"/>
</dbReference>
<dbReference type="InterPro" id="IPR013675">
    <property type="entry name" value="Mtase_sm_N"/>
</dbReference>
<dbReference type="InterPro" id="IPR023543">
    <property type="entry name" value="rRNA_ssu_MeTfrase_C"/>
</dbReference>
<dbReference type="InterPro" id="IPR046977">
    <property type="entry name" value="RsmC/RlmG"/>
</dbReference>
<dbReference type="InterPro" id="IPR029063">
    <property type="entry name" value="SAM-dependent_MTases_sf"/>
</dbReference>
<dbReference type="InterPro" id="IPR007848">
    <property type="entry name" value="Small_mtfrase_dom"/>
</dbReference>
<dbReference type="NCBIfam" id="NF007023">
    <property type="entry name" value="PRK09489.1"/>
    <property type="match status" value="1"/>
</dbReference>
<dbReference type="PANTHER" id="PTHR47816">
    <property type="entry name" value="RIBOSOMAL RNA SMALL SUBUNIT METHYLTRANSFERASE C"/>
    <property type="match status" value="1"/>
</dbReference>
<dbReference type="PANTHER" id="PTHR47816:SF4">
    <property type="entry name" value="RIBOSOMAL RNA SMALL SUBUNIT METHYLTRANSFERASE C"/>
    <property type="match status" value="1"/>
</dbReference>
<dbReference type="Pfam" id="PF05175">
    <property type="entry name" value="MTS"/>
    <property type="match status" value="1"/>
</dbReference>
<dbReference type="Pfam" id="PF08468">
    <property type="entry name" value="MTS_N"/>
    <property type="match status" value="1"/>
</dbReference>
<dbReference type="SUPFAM" id="SSF53335">
    <property type="entry name" value="S-adenosyl-L-methionine-dependent methyltransferases"/>
    <property type="match status" value="1"/>
</dbReference>
<reference key="1">
    <citation type="journal article" date="2006" name="J. Bacteriol.">
        <title>Complete genome sequence of Yersinia pestis strains Antiqua and Nepal516: evidence of gene reduction in an emerging pathogen.</title>
        <authorList>
            <person name="Chain P.S.G."/>
            <person name="Hu P."/>
            <person name="Malfatti S.A."/>
            <person name="Radnedge L."/>
            <person name="Larimer F."/>
            <person name="Vergez L.M."/>
            <person name="Worsham P."/>
            <person name="Chu M.C."/>
            <person name="Andersen G.L."/>
        </authorList>
    </citation>
    <scope>NUCLEOTIDE SEQUENCE [LARGE SCALE GENOMIC DNA]</scope>
    <source>
        <strain>Antiqua</strain>
    </source>
</reference>
<proteinExistence type="inferred from homology"/>
<sequence length="347" mass="37799">MSALTPASEVILRHSDEFIARHVLFAGDLQDALPAQFDAAGVRVHTNQYHHWQLLSNTLEENVQFGLLATAETLAACDTLIYYWPKSKQEAQFQLANLLSILPVGTDIFVVGENRSGVRSAEEMLADFAQLAKIDSARRCGLYHGRLDKQPEFDADAWWESYQVGGVTVKTLPGVFSRDSLDSGSHLLLSTFNEPFKGSVLDVGCGAGVLASVLAQQSPKIKWTLSDVSAAAIEASRATLAVNNIEAQVIASNVYSDIKGRFEMIISNPPFHDGIQTSLTAAEMLIRGATAHLHVGGKLRIVANSFLPYPALLDAAFGSHEVLAQNGRFKVYQATVGRPPRDPKKKR</sequence>
<name>RSMC_YERPA</name>